<proteinExistence type="inferred from homology"/>
<accession>Q6DA02</accession>
<keyword id="KW-0131">Cell cycle</keyword>
<keyword id="KW-0132">Cell division</keyword>
<keyword id="KW-0175">Coiled coil</keyword>
<keyword id="KW-0963">Cytoplasm</keyword>
<keyword id="KW-1185">Reference proteome</keyword>
<keyword id="KW-0717">Septation</keyword>
<protein>
    <recommendedName>
        <fullName evidence="1">Cell division protein ZapA</fullName>
    </recommendedName>
    <alternativeName>
        <fullName evidence="1">Z ring-associated protein ZapA</fullName>
    </alternativeName>
</protein>
<name>ZAPA_PECAS</name>
<evidence type="ECO:0000255" key="1">
    <source>
        <dbReference type="HAMAP-Rule" id="MF_02012"/>
    </source>
</evidence>
<sequence>MSAQPVDIQIFGRSLRVNCPPEQQEALNQAAEDLNQRLQDLKVRTRVTNTEQLVFIAALNVCHELAQERGKTRDYASNMEQRIRMLQQTIEQALLEQGKITDRQGTQFE</sequence>
<gene>
    <name evidence="1" type="primary">zapA</name>
    <name type="ordered locus">ECA0461</name>
</gene>
<feature type="chain" id="PRO_0000345641" description="Cell division protein ZapA">
    <location>
        <begin position="1"/>
        <end position="109"/>
    </location>
</feature>
<feature type="coiled-coil region" evidence="1">
    <location>
        <begin position="21"/>
        <end position="99"/>
    </location>
</feature>
<reference key="1">
    <citation type="journal article" date="2004" name="Proc. Natl. Acad. Sci. U.S.A.">
        <title>Genome sequence of the enterobacterial phytopathogen Erwinia carotovora subsp. atroseptica and characterization of virulence factors.</title>
        <authorList>
            <person name="Bell K.S."/>
            <person name="Sebaihia M."/>
            <person name="Pritchard L."/>
            <person name="Holden M.T.G."/>
            <person name="Hyman L.J."/>
            <person name="Holeva M.C."/>
            <person name="Thomson N.R."/>
            <person name="Bentley S.D."/>
            <person name="Churcher L.J.C."/>
            <person name="Mungall K."/>
            <person name="Atkin R."/>
            <person name="Bason N."/>
            <person name="Brooks K."/>
            <person name="Chillingworth T."/>
            <person name="Clark K."/>
            <person name="Doggett J."/>
            <person name="Fraser A."/>
            <person name="Hance Z."/>
            <person name="Hauser H."/>
            <person name="Jagels K."/>
            <person name="Moule S."/>
            <person name="Norbertczak H."/>
            <person name="Ormond D."/>
            <person name="Price C."/>
            <person name="Quail M.A."/>
            <person name="Sanders M."/>
            <person name="Walker D."/>
            <person name="Whitehead S."/>
            <person name="Salmond G.P.C."/>
            <person name="Birch P.R.J."/>
            <person name="Parkhill J."/>
            <person name="Toth I.K."/>
        </authorList>
    </citation>
    <scope>NUCLEOTIDE SEQUENCE [LARGE SCALE GENOMIC DNA]</scope>
    <source>
        <strain>SCRI 1043 / ATCC BAA-672</strain>
    </source>
</reference>
<organism>
    <name type="scientific">Pectobacterium atrosepticum (strain SCRI 1043 / ATCC BAA-672)</name>
    <name type="common">Erwinia carotovora subsp. atroseptica</name>
    <dbReference type="NCBI Taxonomy" id="218491"/>
    <lineage>
        <taxon>Bacteria</taxon>
        <taxon>Pseudomonadati</taxon>
        <taxon>Pseudomonadota</taxon>
        <taxon>Gammaproteobacteria</taxon>
        <taxon>Enterobacterales</taxon>
        <taxon>Pectobacteriaceae</taxon>
        <taxon>Pectobacterium</taxon>
    </lineage>
</organism>
<comment type="function">
    <text evidence="1">Activator of cell division through the inhibition of FtsZ GTPase activity, therefore promoting FtsZ assembly into bundles of protofilaments necessary for the formation of the division Z ring. It is recruited early at mid-cell but it is not essential for cell division.</text>
</comment>
<comment type="subunit">
    <text evidence="1">Homodimer. Interacts with FtsZ.</text>
</comment>
<comment type="subcellular location">
    <subcellularLocation>
        <location evidence="1">Cytoplasm</location>
    </subcellularLocation>
    <text evidence="1">Localizes at mid-cell.</text>
</comment>
<comment type="similarity">
    <text evidence="1">Belongs to the ZapA family. Type 1 subfamily.</text>
</comment>
<dbReference type="EMBL" id="BX950851">
    <property type="protein sequence ID" value="CAG73376.1"/>
    <property type="molecule type" value="Genomic_DNA"/>
</dbReference>
<dbReference type="RefSeq" id="WP_011092083.1">
    <property type="nucleotide sequence ID" value="NC_004547.2"/>
</dbReference>
<dbReference type="SMR" id="Q6DA02"/>
<dbReference type="STRING" id="218491.ECA0461"/>
<dbReference type="GeneID" id="57207313"/>
<dbReference type="KEGG" id="eca:ECA0461"/>
<dbReference type="PATRIC" id="fig|218491.5.peg.464"/>
<dbReference type="eggNOG" id="COG3027">
    <property type="taxonomic scope" value="Bacteria"/>
</dbReference>
<dbReference type="HOGENOM" id="CLU_116623_3_0_6"/>
<dbReference type="OrthoDB" id="5917174at2"/>
<dbReference type="Proteomes" id="UP000007966">
    <property type="component" value="Chromosome"/>
</dbReference>
<dbReference type="GO" id="GO:0032153">
    <property type="term" value="C:cell division site"/>
    <property type="evidence" value="ECO:0007669"/>
    <property type="project" value="TreeGrafter"/>
</dbReference>
<dbReference type="GO" id="GO:0030428">
    <property type="term" value="C:cell septum"/>
    <property type="evidence" value="ECO:0007669"/>
    <property type="project" value="TreeGrafter"/>
</dbReference>
<dbReference type="GO" id="GO:0005829">
    <property type="term" value="C:cytosol"/>
    <property type="evidence" value="ECO:0007669"/>
    <property type="project" value="TreeGrafter"/>
</dbReference>
<dbReference type="GO" id="GO:0005886">
    <property type="term" value="C:plasma membrane"/>
    <property type="evidence" value="ECO:0007669"/>
    <property type="project" value="UniProtKB-UniRule"/>
</dbReference>
<dbReference type="GO" id="GO:0000917">
    <property type="term" value="P:division septum assembly"/>
    <property type="evidence" value="ECO:0007669"/>
    <property type="project" value="UniProtKB-KW"/>
</dbReference>
<dbReference type="GO" id="GO:0043093">
    <property type="term" value="P:FtsZ-dependent cytokinesis"/>
    <property type="evidence" value="ECO:0007669"/>
    <property type="project" value="TreeGrafter"/>
</dbReference>
<dbReference type="GO" id="GO:0000921">
    <property type="term" value="P:septin ring assembly"/>
    <property type="evidence" value="ECO:0007669"/>
    <property type="project" value="TreeGrafter"/>
</dbReference>
<dbReference type="FunFam" id="1.20.5.50:FF:000001">
    <property type="entry name" value="Cell division protein ZapA"/>
    <property type="match status" value="1"/>
</dbReference>
<dbReference type="FunFam" id="3.30.160.880:FF:000001">
    <property type="entry name" value="Cell division protein ZapA"/>
    <property type="match status" value="1"/>
</dbReference>
<dbReference type="Gene3D" id="1.20.5.50">
    <property type="match status" value="1"/>
</dbReference>
<dbReference type="Gene3D" id="3.30.160.880">
    <property type="entry name" value="Cell division protein ZapA protomer, N-terminal domain"/>
    <property type="match status" value="1"/>
</dbReference>
<dbReference type="HAMAP" id="MF_02012">
    <property type="entry name" value="ZapA_type1"/>
    <property type="match status" value="1"/>
</dbReference>
<dbReference type="InterPro" id="IPR007838">
    <property type="entry name" value="Cell_div_ZapA-like"/>
</dbReference>
<dbReference type="InterPro" id="IPR036192">
    <property type="entry name" value="Cell_div_ZapA-like_sf"/>
</dbReference>
<dbReference type="InterPro" id="IPR023771">
    <property type="entry name" value="Cell_div_ZapA_eubact"/>
</dbReference>
<dbReference type="InterPro" id="IPR042233">
    <property type="entry name" value="Cell_div_ZapA_N"/>
</dbReference>
<dbReference type="NCBIfam" id="NF008209">
    <property type="entry name" value="PRK10972.1"/>
    <property type="match status" value="1"/>
</dbReference>
<dbReference type="PANTHER" id="PTHR34981">
    <property type="entry name" value="CELL DIVISION PROTEIN ZAPA"/>
    <property type="match status" value="1"/>
</dbReference>
<dbReference type="PANTHER" id="PTHR34981:SF1">
    <property type="entry name" value="CELL DIVISION PROTEIN ZAPA"/>
    <property type="match status" value="1"/>
</dbReference>
<dbReference type="Pfam" id="PF05164">
    <property type="entry name" value="ZapA"/>
    <property type="match status" value="1"/>
</dbReference>
<dbReference type="SUPFAM" id="SSF102829">
    <property type="entry name" value="Cell division protein ZapA-like"/>
    <property type="match status" value="1"/>
</dbReference>